<name>DIOX2_RUTGR</name>
<comment type="function">
    <text evidence="3">2-oxoglutarate (OG)- and Fe(II)-dependent dioxygenase (2OGD) involved in scopoletin and umbelliferone biosynthesis (By similarity). Converts feruloyl CoA into 6'-hydroxyferuloyl CoA, and p-coumaroyl CoA into 2,4-dihydroxycinnamoyl-CoA (By similarity).</text>
</comment>
<comment type="catalytic activity">
    <reaction evidence="3">
        <text>(E)-4-coumaroyl-CoA + 2-oxoglutarate + O2 = (E)-2,4-dihydroxycinnamoyl-CoA + succinate + CO2</text>
        <dbReference type="Rhea" id="RHEA:57868"/>
        <dbReference type="ChEBI" id="CHEBI:15379"/>
        <dbReference type="ChEBI" id="CHEBI:16526"/>
        <dbReference type="ChEBI" id="CHEBI:16810"/>
        <dbReference type="ChEBI" id="CHEBI:30031"/>
        <dbReference type="ChEBI" id="CHEBI:85008"/>
        <dbReference type="ChEBI" id="CHEBI:142398"/>
        <dbReference type="EC" id="1.14.11.62"/>
    </reaction>
</comment>
<comment type="catalytic activity">
    <reaction evidence="3">
        <text>(E)-feruloyl-CoA + 2-oxoglutarate + O2 = (E)-6-hydroxyferuloyl-CoA + succinate + CO2</text>
        <dbReference type="Rhea" id="RHEA:57856"/>
        <dbReference type="ChEBI" id="CHEBI:15379"/>
        <dbReference type="ChEBI" id="CHEBI:16526"/>
        <dbReference type="ChEBI" id="CHEBI:16810"/>
        <dbReference type="ChEBI" id="CHEBI:30031"/>
        <dbReference type="ChEBI" id="CHEBI:87305"/>
        <dbReference type="ChEBI" id="CHEBI:142390"/>
        <dbReference type="EC" id="1.14.11.61"/>
    </reaction>
</comment>
<comment type="cofactor">
    <cofactor evidence="2">
        <name>L-ascorbate</name>
        <dbReference type="ChEBI" id="CHEBI:38290"/>
    </cofactor>
</comment>
<comment type="cofactor">
    <cofactor evidence="4">
        <name>Fe(2+)</name>
        <dbReference type="ChEBI" id="CHEBI:29033"/>
    </cofactor>
    <text evidence="4">Binds 1 Fe(2+) ion per subunit.</text>
</comment>
<comment type="pathway">
    <text evidence="3">Phenylpropanoid metabolism.</text>
</comment>
<comment type="similarity">
    <text evidence="6">Belongs to the iron/ascorbate-dependent oxidoreductase family.</text>
</comment>
<reference key="1">
    <citation type="journal article" date="2012" name="Plant J.">
        <title>A 2-oxoglutarate-dependent dioxygenase from Ruta graveolens L. exhibits p-coumaroyl CoA 2'-hydroxylase activity (C2'H): a missing step in the synthesis of umbelliferone in plants.</title>
        <authorList>
            <person name="Vialart G."/>
            <person name="Hehn A."/>
            <person name="Olry A."/>
            <person name="Ito K."/>
            <person name="Krieger C."/>
            <person name="Larbat R."/>
            <person name="Paris C."/>
            <person name="Shimizu B."/>
            <person name="Sugimoto Y."/>
            <person name="Mizutani M."/>
            <person name="Bourgaud F."/>
        </authorList>
    </citation>
    <scope>NUCLEOTIDE SEQUENCE [MRNA]</scope>
</reference>
<protein>
    <recommendedName>
        <fullName evidence="5">Bi-functional coumaroyl CoA and feruloyl CoA ortho-hydroxylase Diox2</fullName>
        <ecNumber evidence="3 4">1.14.11.61</ecNumber>
        <ecNumber evidence="3 4">1.14.11.62</ecNumber>
    </recommendedName>
    <alternativeName>
        <fullName evidence="5">2-oxoglutarate-dependent dioxygenase 2</fullName>
    </alternativeName>
</protein>
<keyword id="KW-0223">Dioxygenase</keyword>
<keyword id="KW-0408">Iron</keyword>
<keyword id="KW-0479">Metal-binding</keyword>
<keyword id="KW-0560">Oxidoreductase</keyword>
<feature type="chain" id="PRO_0000447360" description="Bi-functional coumaroyl CoA and feruloyl CoA ortho-hydroxylase Diox2">
    <location>
        <begin position="1"/>
        <end position="369"/>
    </location>
</feature>
<feature type="domain" description="Fe2OG dioxygenase" evidence="4">
    <location>
        <begin position="215"/>
        <end position="318"/>
    </location>
</feature>
<feature type="binding site" evidence="1">
    <location>
        <position position="224"/>
    </location>
    <ligand>
        <name>2-oxoglutarate</name>
        <dbReference type="ChEBI" id="CHEBI:16810"/>
    </ligand>
</feature>
<feature type="binding site" evidence="4">
    <location>
        <position position="239"/>
    </location>
    <ligand>
        <name>Fe cation</name>
        <dbReference type="ChEBI" id="CHEBI:24875"/>
    </ligand>
</feature>
<feature type="binding site" evidence="4">
    <location>
        <position position="241"/>
    </location>
    <ligand>
        <name>Fe cation</name>
        <dbReference type="ChEBI" id="CHEBI:24875"/>
    </ligand>
</feature>
<feature type="binding site" evidence="4">
    <location>
        <position position="299"/>
    </location>
    <ligand>
        <name>Fe cation</name>
        <dbReference type="ChEBI" id="CHEBI:24875"/>
    </ligand>
</feature>
<feature type="binding site" evidence="4">
    <location>
        <position position="309"/>
    </location>
    <ligand>
        <name>2-oxoglutarate</name>
        <dbReference type="ChEBI" id="CHEBI:16810"/>
    </ligand>
</feature>
<feature type="binding site" evidence="1">
    <location>
        <position position="311"/>
    </location>
    <ligand>
        <name>2-oxoglutarate</name>
        <dbReference type="ChEBI" id="CHEBI:16810"/>
    </ligand>
</feature>
<accession>A0A023GS29</accession>
<gene>
    <name evidence="5" type="primary">DIOX2</name>
</gene>
<sequence>MAPTKDFSTATNGADSWDDVADFVTKKGHGVKGLSERGIKTLPKPFHQPLEERFSEKKILERASIPLIDMSEWDSPEVVKSICDAAENWGFFQIVNHGVPLETLERVKEATHRFFGLPAEEKNKYSKENSPINNVRFGSSFVPHVEKALEWKDFLSMFYVSXEETNTYWPPICXDQMLEYMRSSEVLIKRLMEVLVVKGLKVKQIDEIREPMLVGSRRVNLNYYPKCPNRELTLGVGRHSDISTFTILLQDQIEVLHVRKLDDTGNTWVHVTPIAGSLIINIGDALQIMSNGRYKSIEHMVVANGTQDRISVPLFVNPKPQAILCPFPEVLANGEKPLYKPVFCSDYSRHFYTKPHDGKKTVDFALINY</sequence>
<dbReference type="EC" id="1.14.11.61" evidence="3 4"/>
<dbReference type="EC" id="1.14.11.62" evidence="3 4"/>
<dbReference type="EMBL" id="GU460157">
    <property type="protein sequence ID" value="ADV77969.1"/>
    <property type="molecule type" value="mRNA"/>
</dbReference>
<dbReference type="GO" id="GO:0016706">
    <property type="term" value="F:2-oxoglutarate-dependent dioxygenase activity"/>
    <property type="evidence" value="ECO:0000250"/>
    <property type="project" value="UniProtKB"/>
</dbReference>
<dbReference type="GO" id="GO:0102312">
    <property type="term" value="F:4-coumaroyl 2'-hydroxylase activity"/>
    <property type="evidence" value="ECO:0007669"/>
    <property type="project" value="UniProtKB-EC"/>
</dbReference>
<dbReference type="GO" id="GO:0046872">
    <property type="term" value="F:metal ion binding"/>
    <property type="evidence" value="ECO:0007669"/>
    <property type="project" value="UniProtKB-KW"/>
</dbReference>
<dbReference type="GO" id="GO:0009805">
    <property type="term" value="P:coumarin biosynthetic process"/>
    <property type="evidence" value="ECO:0000250"/>
    <property type="project" value="UniProtKB"/>
</dbReference>
<dbReference type="GO" id="GO:0009699">
    <property type="term" value="P:phenylpropanoid biosynthetic process"/>
    <property type="evidence" value="ECO:0000250"/>
    <property type="project" value="UniProtKB"/>
</dbReference>
<dbReference type="GO" id="GO:0010224">
    <property type="term" value="P:response to UV-B"/>
    <property type="evidence" value="ECO:0000250"/>
    <property type="project" value="UniProtKB"/>
</dbReference>
<dbReference type="FunFam" id="2.60.120.330:FF:000023">
    <property type="entry name" value="Feruloyl CoA ortho-hydroxylase 1"/>
    <property type="match status" value="1"/>
</dbReference>
<dbReference type="Gene3D" id="2.60.120.330">
    <property type="entry name" value="B-lactam Antibiotic, Isopenicillin N Synthase, Chain"/>
    <property type="match status" value="1"/>
</dbReference>
<dbReference type="InterPro" id="IPR026992">
    <property type="entry name" value="DIOX_N"/>
</dbReference>
<dbReference type="InterPro" id="IPR044861">
    <property type="entry name" value="IPNS-like_FE2OG_OXY"/>
</dbReference>
<dbReference type="InterPro" id="IPR027443">
    <property type="entry name" value="IPNS-like_sf"/>
</dbReference>
<dbReference type="InterPro" id="IPR005123">
    <property type="entry name" value="Oxoglu/Fe-dep_dioxygenase_dom"/>
</dbReference>
<dbReference type="PANTHER" id="PTHR10209:SF243">
    <property type="entry name" value="FERULOYL COA ORTHO-HYDROXYLASE 1-RELATED"/>
    <property type="match status" value="1"/>
</dbReference>
<dbReference type="PANTHER" id="PTHR10209">
    <property type="entry name" value="OXIDOREDUCTASE, 2OG-FE II OXYGENASE FAMILY PROTEIN"/>
    <property type="match status" value="1"/>
</dbReference>
<dbReference type="Pfam" id="PF03171">
    <property type="entry name" value="2OG-FeII_Oxy"/>
    <property type="match status" value="1"/>
</dbReference>
<dbReference type="Pfam" id="PF14226">
    <property type="entry name" value="DIOX_N"/>
    <property type="match status" value="1"/>
</dbReference>
<dbReference type="SUPFAM" id="SSF51197">
    <property type="entry name" value="Clavaminate synthase-like"/>
    <property type="match status" value="1"/>
</dbReference>
<dbReference type="PROSITE" id="PS51471">
    <property type="entry name" value="FE2OG_OXY"/>
    <property type="match status" value="1"/>
</dbReference>
<proteinExistence type="evidence at transcript level"/>
<organism>
    <name type="scientific">Ruta graveolens</name>
    <name type="common">Common rue</name>
    <dbReference type="NCBI Taxonomy" id="37565"/>
    <lineage>
        <taxon>Eukaryota</taxon>
        <taxon>Viridiplantae</taxon>
        <taxon>Streptophyta</taxon>
        <taxon>Embryophyta</taxon>
        <taxon>Tracheophyta</taxon>
        <taxon>Spermatophyta</taxon>
        <taxon>Magnoliopsida</taxon>
        <taxon>eudicotyledons</taxon>
        <taxon>Gunneridae</taxon>
        <taxon>Pentapetalae</taxon>
        <taxon>rosids</taxon>
        <taxon>malvids</taxon>
        <taxon>Sapindales</taxon>
        <taxon>Rutaceae</taxon>
        <taxon>Rutoideae</taxon>
        <taxon>Ruta</taxon>
    </lineage>
</organism>
<evidence type="ECO:0000250" key="1">
    <source>
        <dbReference type="UniProtKB" id="D4N500"/>
    </source>
</evidence>
<evidence type="ECO:0000250" key="2">
    <source>
        <dbReference type="UniProtKB" id="Q9C899"/>
    </source>
</evidence>
<evidence type="ECO:0000250" key="3">
    <source>
        <dbReference type="UniProtKB" id="W5QJZ5"/>
    </source>
</evidence>
<evidence type="ECO:0000255" key="4">
    <source>
        <dbReference type="PROSITE-ProRule" id="PRU00805"/>
    </source>
</evidence>
<evidence type="ECO:0000303" key="5">
    <source>
    </source>
</evidence>
<evidence type="ECO:0000305" key="6"/>